<organism>
    <name type="scientific">Skeletonema costatum</name>
    <name type="common">Marine centric diatom</name>
    <name type="synonym">Melosira costata</name>
    <dbReference type="NCBI Taxonomy" id="2843"/>
    <lineage>
        <taxon>Eukaryota</taxon>
        <taxon>Sar</taxon>
        <taxon>Stramenopiles</taxon>
        <taxon>Ochrophyta</taxon>
        <taxon>Bacillariophyta</taxon>
        <taxon>Coscinodiscophyceae</taxon>
        <taxon>Thalassiosirophycidae</taxon>
        <taxon>Thalassiosirales</taxon>
        <taxon>Skeletonemataceae</taxon>
        <taxon>Skeletonema</taxon>
    </lineage>
</organism>
<feature type="chain" id="PRO_0000217344" description="Uncharacterized protein ycf33">
    <location>
        <begin position="1"/>
        <end position="64"/>
    </location>
</feature>
<geneLocation type="chloroplast"/>
<keyword id="KW-0150">Chloroplast</keyword>
<keyword id="KW-0934">Plastid</keyword>
<comment type="subcellular location">
    <subcellularLocation>
        <location>Plastid</location>
        <location>Chloroplast</location>
    </subcellularLocation>
</comment>
<comment type="similarity">
    <text evidence="1">Belongs to the ycf33 family.</text>
</comment>
<name>YCF33_SKECO</name>
<reference key="1">
    <citation type="journal article" date="1999" name="DNA Seq.">
        <title>Comparison of gene arrangements of chloroplasts between two centric diatoms, Skeletonema costatum and Odontella sinensis.</title>
        <authorList>
            <person name="Tada N."/>
            <person name="Shibata S."/>
            <person name="Otsuka S."/>
            <person name="Namba K."/>
            <person name="Oyaizu H."/>
        </authorList>
    </citation>
    <scope>NUCLEOTIDE SEQUENCE [GENOMIC DNA]</scope>
    <source>
        <strain>NIES-323 / Sk-85w</strain>
    </source>
</reference>
<dbReference type="EMBL" id="AJ132265">
    <property type="protein sequence ID" value="CAA10629.1"/>
    <property type="molecule type" value="Genomic_DNA"/>
</dbReference>
<dbReference type="SMR" id="O96808"/>
<dbReference type="GO" id="GO:0009507">
    <property type="term" value="C:chloroplast"/>
    <property type="evidence" value="ECO:0007669"/>
    <property type="project" value="UniProtKB-SubCell"/>
</dbReference>
<dbReference type="InterPro" id="IPR008470">
    <property type="entry name" value="Uncharacterised_Ycf33"/>
</dbReference>
<dbReference type="Pfam" id="PF05421">
    <property type="entry name" value="DUF751"/>
    <property type="match status" value="1"/>
</dbReference>
<evidence type="ECO:0000305" key="1"/>
<sequence>MNNFWTNITRYPRFFISSMIGLVLIILTPFRNLFKTPKLRWILILFSLVFILSLYFIIRSMVGL</sequence>
<protein>
    <recommendedName>
        <fullName>Uncharacterized protein ycf33</fullName>
    </recommendedName>
</protein>
<accession>O96808</accession>
<gene>
    <name type="primary">ycf33</name>
</gene>
<proteinExistence type="inferred from homology"/>